<sequence>MNEPSPSDWHLDAYDYELPPDRIAQSAVEPRDHARLLVFPDREQLWHRHFYDLPQLLRPGDLLIVNDTRVIPARLYGQKIETGVPVEVLLVEEHGPGYWLTLVKPGKRLKPGSAIAFGPNPEDPLLVADVEASDPATGGRWLRFRGEAEAFWSQLATLGEMPLPPYIHTTASDPERYQTVYSRELGAVAAPTAGLHFTPELLTTLADMGIATAPVTLHVGIGTFRSVDVEDIRQHEMHSERMMVPAATVEKIQATKAAGGRVIAVGTTSVRAIEGAAASGELKPGSDRVNLFIYPGYRWQIIDGLITNFHLPRSSLMMLVSALIGRDRLLSAYATAIAEQYRFYSFGDAMLILPDAKLP</sequence>
<proteinExistence type="inferred from homology"/>
<dbReference type="EC" id="2.4.99.17" evidence="1"/>
<dbReference type="EMBL" id="CP000100">
    <property type="protein sequence ID" value="ABB58378.1"/>
    <property type="molecule type" value="Genomic_DNA"/>
</dbReference>
<dbReference type="RefSeq" id="WP_011378419.1">
    <property type="nucleotide sequence ID" value="NZ_JACJTX010000001.1"/>
</dbReference>
<dbReference type="SMR" id="Q31KP1"/>
<dbReference type="STRING" id="1140.Synpcc7942_2348"/>
<dbReference type="PaxDb" id="1140-Synpcc7942_2348"/>
<dbReference type="GeneID" id="72431235"/>
<dbReference type="KEGG" id="syf:Synpcc7942_2348"/>
<dbReference type="eggNOG" id="COG0809">
    <property type="taxonomic scope" value="Bacteria"/>
</dbReference>
<dbReference type="HOGENOM" id="CLU_039110_1_0_3"/>
<dbReference type="OrthoDB" id="9805933at2"/>
<dbReference type="BioCyc" id="SYNEL:SYNPCC7942_2348-MONOMER"/>
<dbReference type="UniPathway" id="UPA00392"/>
<dbReference type="Proteomes" id="UP000889800">
    <property type="component" value="Chromosome"/>
</dbReference>
<dbReference type="GO" id="GO:0005737">
    <property type="term" value="C:cytoplasm"/>
    <property type="evidence" value="ECO:0007669"/>
    <property type="project" value="UniProtKB-SubCell"/>
</dbReference>
<dbReference type="GO" id="GO:0051075">
    <property type="term" value="F:S-adenosylmethionine:tRNA ribosyltransferase-isomerase activity"/>
    <property type="evidence" value="ECO:0007669"/>
    <property type="project" value="UniProtKB-EC"/>
</dbReference>
<dbReference type="GO" id="GO:0008616">
    <property type="term" value="P:queuosine biosynthetic process"/>
    <property type="evidence" value="ECO:0007669"/>
    <property type="project" value="UniProtKB-UniRule"/>
</dbReference>
<dbReference type="GO" id="GO:0002099">
    <property type="term" value="P:tRNA wobble guanine modification"/>
    <property type="evidence" value="ECO:0007669"/>
    <property type="project" value="TreeGrafter"/>
</dbReference>
<dbReference type="FunFam" id="2.40.10.240:FF:000002">
    <property type="entry name" value="S-adenosylmethionine:tRNA ribosyltransferase-isomerase"/>
    <property type="match status" value="1"/>
</dbReference>
<dbReference type="FunFam" id="3.40.1780.10:FF:000001">
    <property type="entry name" value="S-adenosylmethionine:tRNA ribosyltransferase-isomerase"/>
    <property type="match status" value="1"/>
</dbReference>
<dbReference type="Gene3D" id="2.40.10.240">
    <property type="entry name" value="QueA-like"/>
    <property type="match status" value="1"/>
</dbReference>
<dbReference type="Gene3D" id="3.40.1780.10">
    <property type="entry name" value="QueA-like"/>
    <property type="match status" value="1"/>
</dbReference>
<dbReference type="HAMAP" id="MF_00113">
    <property type="entry name" value="QueA"/>
    <property type="match status" value="1"/>
</dbReference>
<dbReference type="InterPro" id="IPR003699">
    <property type="entry name" value="QueA"/>
</dbReference>
<dbReference type="InterPro" id="IPR042118">
    <property type="entry name" value="QueA_dom1"/>
</dbReference>
<dbReference type="InterPro" id="IPR042119">
    <property type="entry name" value="QueA_dom2"/>
</dbReference>
<dbReference type="InterPro" id="IPR036100">
    <property type="entry name" value="QueA_sf"/>
</dbReference>
<dbReference type="NCBIfam" id="NF001140">
    <property type="entry name" value="PRK00147.1"/>
    <property type="match status" value="1"/>
</dbReference>
<dbReference type="NCBIfam" id="TIGR00113">
    <property type="entry name" value="queA"/>
    <property type="match status" value="1"/>
</dbReference>
<dbReference type="PANTHER" id="PTHR30307">
    <property type="entry name" value="S-ADENOSYLMETHIONINE:TRNA RIBOSYLTRANSFERASE-ISOMERASE"/>
    <property type="match status" value="1"/>
</dbReference>
<dbReference type="PANTHER" id="PTHR30307:SF0">
    <property type="entry name" value="S-ADENOSYLMETHIONINE:TRNA RIBOSYLTRANSFERASE-ISOMERASE"/>
    <property type="match status" value="1"/>
</dbReference>
<dbReference type="Pfam" id="PF02547">
    <property type="entry name" value="Queuosine_synth"/>
    <property type="match status" value="1"/>
</dbReference>
<dbReference type="SUPFAM" id="SSF111337">
    <property type="entry name" value="QueA-like"/>
    <property type="match status" value="1"/>
</dbReference>
<evidence type="ECO:0000255" key="1">
    <source>
        <dbReference type="HAMAP-Rule" id="MF_00113"/>
    </source>
</evidence>
<organism>
    <name type="scientific">Synechococcus elongatus (strain ATCC 33912 / PCC 7942 / FACHB-805)</name>
    <name type="common">Anacystis nidulans R2</name>
    <dbReference type="NCBI Taxonomy" id="1140"/>
    <lineage>
        <taxon>Bacteria</taxon>
        <taxon>Bacillati</taxon>
        <taxon>Cyanobacteriota</taxon>
        <taxon>Cyanophyceae</taxon>
        <taxon>Synechococcales</taxon>
        <taxon>Synechococcaceae</taxon>
        <taxon>Synechococcus</taxon>
    </lineage>
</organism>
<feature type="chain" id="PRO_1000015297" description="S-adenosylmethionine:tRNA ribosyltransferase-isomerase">
    <location>
        <begin position="1"/>
        <end position="359"/>
    </location>
</feature>
<comment type="function">
    <text evidence="1">Transfers and isomerizes the ribose moiety from AdoMet to the 7-aminomethyl group of 7-deazaguanine (preQ1-tRNA) to give epoxyqueuosine (oQ-tRNA).</text>
</comment>
<comment type="catalytic activity">
    <reaction evidence="1">
        <text>7-aminomethyl-7-carbaguanosine(34) in tRNA + S-adenosyl-L-methionine = epoxyqueuosine(34) in tRNA + adenine + L-methionine + 2 H(+)</text>
        <dbReference type="Rhea" id="RHEA:32155"/>
        <dbReference type="Rhea" id="RHEA-COMP:10342"/>
        <dbReference type="Rhea" id="RHEA-COMP:18582"/>
        <dbReference type="ChEBI" id="CHEBI:15378"/>
        <dbReference type="ChEBI" id="CHEBI:16708"/>
        <dbReference type="ChEBI" id="CHEBI:57844"/>
        <dbReference type="ChEBI" id="CHEBI:59789"/>
        <dbReference type="ChEBI" id="CHEBI:82833"/>
        <dbReference type="ChEBI" id="CHEBI:194443"/>
        <dbReference type="EC" id="2.4.99.17"/>
    </reaction>
</comment>
<comment type="pathway">
    <text evidence="1">tRNA modification; tRNA-queuosine biosynthesis.</text>
</comment>
<comment type="subunit">
    <text evidence="1">Monomer.</text>
</comment>
<comment type="subcellular location">
    <subcellularLocation>
        <location evidence="1">Cytoplasm</location>
    </subcellularLocation>
</comment>
<comment type="similarity">
    <text evidence="1">Belongs to the QueA family.</text>
</comment>
<keyword id="KW-0963">Cytoplasm</keyword>
<keyword id="KW-0671">Queuosine biosynthesis</keyword>
<keyword id="KW-1185">Reference proteome</keyword>
<keyword id="KW-0949">S-adenosyl-L-methionine</keyword>
<keyword id="KW-0808">Transferase</keyword>
<accession>Q31KP1</accession>
<protein>
    <recommendedName>
        <fullName evidence="1">S-adenosylmethionine:tRNA ribosyltransferase-isomerase</fullName>
        <ecNumber evidence="1">2.4.99.17</ecNumber>
    </recommendedName>
    <alternativeName>
        <fullName evidence="1">Queuosine biosynthesis protein QueA</fullName>
    </alternativeName>
</protein>
<gene>
    <name evidence="1" type="primary">queA</name>
    <name type="ordered locus">Synpcc7942_2348</name>
</gene>
<name>QUEA_SYNE7</name>
<reference key="1">
    <citation type="submission" date="2005-08" db="EMBL/GenBank/DDBJ databases">
        <title>Complete sequence of chromosome 1 of Synechococcus elongatus PCC 7942.</title>
        <authorList>
            <consortium name="US DOE Joint Genome Institute"/>
            <person name="Copeland A."/>
            <person name="Lucas S."/>
            <person name="Lapidus A."/>
            <person name="Barry K."/>
            <person name="Detter J.C."/>
            <person name="Glavina T."/>
            <person name="Hammon N."/>
            <person name="Israni S."/>
            <person name="Pitluck S."/>
            <person name="Schmutz J."/>
            <person name="Larimer F."/>
            <person name="Land M."/>
            <person name="Kyrpides N."/>
            <person name="Lykidis A."/>
            <person name="Golden S."/>
            <person name="Richardson P."/>
        </authorList>
    </citation>
    <scope>NUCLEOTIDE SEQUENCE [LARGE SCALE GENOMIC DNA]</scope>
    <source>
        <strain>ATCC 33912 / PCC 7942 / FACHB-805</strain>
    </source>
</reference>